<proteinExistence type="inferred from homology"/>
<protein>
    <recommendedName>
        <fullName evidence="1">Apolipoprotein N-acyltransferase</fullName>
        <shortName evidence="1">ALP N-acyltransferase</shortName>
        <ecNumber evidence="1">2.3.1.269</ecNumber>
    </recommendedName>
</protein>
<accession>Q820C8</accession>
<gene>
    <name evidence="1" type="primary">lnt</name>
    <name type="synonym">cutE</name>
    <name type="ordered locus">SF0625</name>
    <name type="ordered locus">S0647</name>
</gene>
<keyword id="KW-0012">Acyltransferase</keyword>
<keyword id="KW-0997">Cell inner membrane</keyword>
<keyword id="KW-1003">Cell membrane</keyword>
<keyword id="KW-0472">Membrane</keyword>
<keyword id="KW-1185">Reference proteome</keyword>
<keyword id="KW-0808">Transferase</keyword>
<keyword id="KW-0812">Transmembrane</keyword>
<keyword id="KW-1133">Transmembrane helix</keyword>
<comment type="function">
    <text evidence="1">Catalyzes the phospholipid dependent N-acylation of the N-terminal cysteine of apolipoprotein, the last step in lipoprotein maturation.</text>
</comment>
<comment type="catalytic activity">
    <reaction evidence="1">
        <text>N-terminal S-1,2-diacyl-sn-glyceryl-L-cysteinyl-[lipoprotein] + a glycerophospholipid = N-acyl-S-1,2-diacyl-sn-glyceryl-L-cysteinyl-[lipoprotein] + a 2-acyl-sn-glycero-3-phospholipid + H(+)</text>
        <dbReference type="Rhea" id="RHEA:48228"/>
        <dbReference type="Rhea" id="RHEA-COMP:14681"/>
        <dbReference type="Rhea" id="RHEA-COMP:14684"/>
        <dbReference type="ChEBI" id="CHEBI:15378"/>
        <dbReference type="ChEBI" id="CHEBI:136912"/>
        <dbReference type="ChEBI" id="CHEBI:140656"/>
        <dbReference type="ChEBI" id="CHEBI:140657"/>
        <dbReference type="ChEBI" id="CHEBI:140660"/>
        <dbReference type="EC" id="2.3.1.269"/>
    </reaction>
</comment>
<comment type="pathway">
    <text evidence="1">Protein modification; lipoprotein biosynthesis (N-acyl transfer).</text>
</comment>
<comment type="subcellular location">
    <subcellularLocation>
        <location evidence="1">Cell inner membrane</location>
        <topology evidence="1">Multi-pass membrane protein</topology>
    </subcellularLocation>
</comment>
<comment type="similarity">
    <text evidence="1">Belongs to the CN hydrolase family. Apolipoprotein N-acyltransferase subfamily.</text>
</comment>
<reference key="1">
    <citation type="journal article" date="2002" name="Nucleic Acids Res.">
        <title>Genome sequence of Shigella flexneri 2a: insights into pathogenicity through comparison with genomes of Escherichia coli K12 and O157.</title>
        <authorList>
            <person name="Jin Q."/>
            <person name="Yuan Z."/>
            <person name="Xu J."/>
            <person name="Wang Y."/>
            <person name="Shen Y."/>
            <person name="Lu W."/>
            <person name="Wang J."/>
            <person name="Liu H."/>
            <person name="Yang J."/>
            <person name="Yang F."/>
            <person name="Zhang X."/>
            <person name="Zhang J."/>
            <person name="Yang G."/>
            <person name="Wu H."/>
            <person name="Qu D."/>
            <person name="Dong J."/>
            <person name="Sun L."/>
            <person name="Xue Y."/>
            <person name="Zhao A."/>
            <person name="Gao Y."/>
            <person name="Zhu J."/>
            <person name="Kan B."/>
            <person name="Ding K."/>
            <person name="Chen S."/>
            <person name="Cheng H."/>
            <person name="Yao Z."/>
            <person name="He B."/>
            <person name="Chen R."/>
            <person name="Ma D."/>
            <person name="Qiang B."/>
            <person name="Wen Y."/>
            <person name="Hou Y."/>
            <person name="Yu J."/>
        </authorList>
    </citation>
    <scope>NUCLEOTIDE SEQUENCE [LARGE SCALE GENOMIC DNA]</scope>
    <source>
        <strain>301 / Serotype 2a</strain>
    </source>
</reference>
<reference key="2">
    <citation type="journal article" date="2003" name="Infect. Immun.">
        <title>Complete genome sequence and comparative genomics of Shigella flexneri serotype 2a strain 2457T.</title>
        <authorList>
            <person name="Wei J."/>
            <person name="Goldberg M.B."/>
            <person name="Burland V."/>
            <person name="Venkatesan M.M."/>
            <person name="Deng W."/>
            <person name="Fournier G."/>
            <person name="Mayhew G.F."/>
            <person name="Plunkett G. III"/>
            <person name="Rose D.J."/>
            <person name="Darling A."/>
            <person name="Mau B."/>
            <person name="Perna N.T."/>
            <person name="Payne S.M."/>
            <person name="Runyen-Janecky L.J."/>
            <person name="Zhou S."/>
            <person name="Schwartz D.C."/>
            <person name="Blattner F.R."/>
        </authorList>
    </citation>
    <scope>NUCLEOTIDE SEQUENCE [LARGE SCALE GENOMIC DNA]</scope>
    <source>
        <strain>ATCC 700930 / 2457T / Serotype 2a</strain>
    </source>
</reference>
<evidence type="ECO:0000255" key="1">
    <source>
        <dbReference type="HAMAP-Rule" id="MF_01148"/>
    </source>
</evidence>
<sequence>MDFASLIERQRIRLLLALLFGACGTLAFSPYDVWPAAIISLMGLQALTFNRRPLQSAAIGFCWGFGLFGSGINWVYVSIATFGGMPGPVNIFLVVLLAAYLSLYTGLFAGVLSRLWPKTTWLRVAIATPALWQVTEFLRGWVLTGFPWLQFGYSQIDGPLKGLAPLMGVEAINFLLMMVSGLLALALVKRNWRPLVVAVVLFALPFPLRYIQWFTPQPEKTIQVSMVQGDIPQSLKWDEGQLLNTLKIYYNATAPLMGKSSLIIWPESAITDLEINQQPFLKALDGELRDKGSSLVTGIVDARLNKQNRYDTYNTIITLGKGAPYSYESADRYNKNHLVPFGEFVPLESILRPLAPFFDLPMSSFSRGPYIQPPLSANGIELTAAICYEIILAEQVRDNFRPDTDYLLTISNDAWFGKSIGPWQHFQMARMRALELARPLLRSTNNGITAVIGPQGEIQAMIPQFAREVLTTNVTPTTGLTPYARTGNWPLWVLTALFGFAAVLMSLRQRRK</sequence>
<organism>
    <name type="scientific">Shigella flexneri</name>
    <dbReference type="NCBI Taxonomy" id="623"/>
    <lineage>
        <taxon>Bacteria</taxon>
        <taxon>Pseudomonadati</taxon>
        <taxon>Pseudomonadota</taxon>
        <taxon>Gammaproteobacteria</taxon>
        <taxon>Enterobacterales</taxon>
        <taxon>Enterobacteriaceae</taxon>
        <taxon>Shigella</taxon>
    </lineage>
</organism>
<name>LNT_SHIFL</name>
<dbReference type="EC" id="2.3.1.269" evidence="1"/>
<dbReference type="EMBL" id="AE005674">
    <property type="protein sequence ID" value="AAN42262.1"/>
    <property type="molecule type" value="Genomic_DNA"/>
</dbReference>
<dbReference type="EMBL" id="AE014073">
    <property type="protein sequence ID" value="AAP16133.1"/>
    <property type="molecule type" value="Genomic_DNA"/>
</dbReference>
<dbReference type="RefSeq" id="NP_706555.1">
    <property type="nucleotide sequence ID" value="NC_004337.2"/>
</dbReference>
<dbReference type="RefSeq" id="WP_000344846.1">
    <property type="nucleotide sequence ID" value="NZ_WPGW01000002.1"/>
</dbReference>
<dbReference type="SMR" id="Q820C8"/>
<dbReference type="STRING" id="198214.SF0625"/>
<dbReference type="PaxDb" id="198214-SF0625"/>
<dbReference type="GeneID" id="1023577"/>
<dbReference type="KEGG" id="sfl:SF0625"/>
<dbReference type="KEGG" id="sfx:S0647"/>
<dbReference type="PATRIC" id="fig|198214.7.peg.730"/>
<dbReference type="HOGENOM" id="CLU_019563_3_0_6"/>
<dbReference type="UniPathway" id="UPA00666"/>
<dbReference type="Proteomes" id="UP000001006">
    <property type="component" value="Chromosome"/>
</dbReference>
<dbReference type="Proteomes" id="UP000002673">
    <property type="component" value="Chromosome"/>
</dbReference>
<dbReference type="GO" id="GO:0005886">
    <property type="term" value="C:plasma membrane"/>
    <property type="evidence" value="ECO:0007669"/>
    <property type="project" value="UniProtKB-SubCell"/>
</dbReference>
<dbReference type="GO" id="GO:0016410">
    <property type="term" value="F:N-acyltransferase activity"/>
    <property type="evidence" value="ECO:0007669"/>
    <property type="project" value="UniProtKB-UniRule"/>
</dbReference>
<dbReference type="GO" id="GO:0042158">
    <property type="term" value="P:lipoprotein biosynthetic process"/>
    <property type="evidence" value="ECO:0007669"/>
    <property type="project" value="UniProtKB-UniRule"/>
</dbReference>
<dbReference type="CDD" id="cd07571">
    <property type="entry name" value="ALP_N-acyl_transferase"/>
    <property type="match status" value="1"/>
</dbReference>
<dbReference type="FunFam" id="3.60.110.10:FF:000015">
    <property type="entry name" value="Apolipoprotein N-acyltransferase"/>
    <property type="match status" value="1"/>
</dbReference>
<dbReference type="Gene3D" id="3.60.110.10">
    <property type="entry name" value="Carbon-nitrogen hydrolase"/>
    <property type="match status" value="1"/>
</dbReference>
<dbReference type="HAMAP" id="MF_01148">
    <property type="entry name" value="Lnt"/>
    <property type="match status" value="1"/>
</dbReference>
<dbReference type="InterPro" id="IPR004563">
    <property type="entry name" value="Apolipo_AcylTrfase"/>
</dbReference>
<dbReference type="InterPro" id="IPR003010">
    <property type="entry name" value="C-N_Hydrolase"/>
</dbReference>
<dbReference type="InterPro" id="IPR036526">
    <property type="entry name" value="C-N_Hydrolase_sf"/>
</dbReference>
<dbReference type="InterPro" id="IPR045378">
    <property type="entry name" value="LNT_N"/>
</dbReference>
<dbReference type="NCBIfam" id="TIGR00546">
    <property type="entry name" value="lnt"/>
    <property type="match status" value="1"/>
</dbReference>
<dbReference type="PANTHER" id="PTHR38686">
    <property type="entry name" value="APOLIPOPROTEIN N-ACYLTRANSFERASE"/>
    <property type="match status" value="1"/>
</dbReference>
<dbReference type="PANTHER" id="PTHR38686:SF1">
    <property type="entry name" value="APOLIPOPROTEIN N-ACYLTRANSFERASE"/>
    <property type="match status" value="1"/>
</dbReference>
<dbReference type="Pfam" id="PF00795">
    <property type="entry name" value="CN_hydrolase"/>
    <property type="match status" value="1"/>
</dbReference>
<dbReference type="Pfam" id="PF20154">
    <property type="entry name" value="LNT_N"/>
    <property type="match status" value="1"/>
</dbReference>
<dbReference type="SUPFAM" id="SSF56317">
    <property type="entry name" value="Carbon-nitrogen hydrolase"/>
    <property type="match status" value="1"/>
</dbReference>
<dbReference type="PROSITE" id="PS50263">
    <property type="entry name" value="CN_HYDROLASE"/>
    <property type="match status" value="1"/>
</dbReference>
<feature type="chain" id="PRO_0000178098" description="Apolipoprotein N-acyltransferase">
    <location>
        <begin position="1"/>
        <end position="512"/>
    </location>
</feature>
<feature type="transmembrane region" description="Helical" evidence="1">
    <location>
        <begin position="14"/>
        <end position="34"/>
    </location>
</feature>
<feature type="transmembrane region" description="Helical" evidence="1">
    <location>
        <begin position="57"/>
        <end position="77"/>
    </location>
</feature>
<feature type="transmembrane region" description="Helical" evidence="1">
    <location>
        <begin position="91"/>
        <end position="111"/>
    </location>
</feature>
<feature type="transmembrane region" description="Helical" evidence="1">
    <location>
        <begin position="124"/>
        <end position="143"/>
    </location>
</feature>
<feature type="transmembrane region" description="Helical" evidence="1">
    <location>
        <begin position="168"/>
        <end position="188"/>
    </location>
</feature>
<feature type="transmembrane region" description="Helical" evidence="1">
    <location>
        <begin position="194"/>
        <end position="214"/>
    </location>
</feature>
<feature type="transmembrane region" description="Helical" evidence="1">
    <location>
        <begin position="487"/>
        <end position="507"/>
    </location>
</feature>
<feature type="domain" description="CN hydrolase" evidence="1">
    <location>
        <begin position="227"/>
        <end position="476"/>
    </location>
</feature>
<feature type="active site" description="Proton acceptor" evidence="1">
    <location>
        <position position="267"/>
    </location>
</feature>
<feature type="active site" evidence="1">
    <location>
        <position position="335"/>
    </location>
</feature>
<feature type="active site" description="Nucleophile" evidence="1">
    <location>
        <position position="387"/>
    </location>
</feature>